<accession>B3PSC0</accession>
<name>KHSE_RHIE6</name>
<reference key="1">
    <citation type="journal article" date="2010" name="Appl. Environ. Microbiol.">
        <title>Conserved symbiotic plasmid DNA sequences in the multireplicon pangenomic structure of Rhizobium etli.</title>
        <authorList>
            <person name="Gonzalez V."/>
            <person name="Acosta J.L."/>
            <person name="Santamaria R.I."/>
            <person name="Bustos P."/>
            <person name="Fernandez J.L."/>
            <person name="Hernandez Gonzalez I.L."/>
            <person name="Diaz R."/>
            <person name="Flores M."/>
            <person name="Palacios R."/>
            <person name="Mora J."/>
            <person name="Davila G."/>
        </authorList>
    </citation>
    <scope>NUCLEOTIDE SEQUENCE [LARGE SCALE GENOMIC DNA]</scope>
    <source>
        <strain>CIAT 652</strain>
    </source>
</reference>
<keyword id="KW-0028">Amino-acid biosynthesis</keyword>
<keyword id="KW-0067">ATP-binding</keyword>
<keyword id="KW-0418">Kinase</keyword>
<keyword id="KW-0547">Nucleotide-binding</keyword>
<keyword id="KW-0791">Threonine biosynthesis</keyword>
<keyword id="KW-0808">Transferase</keyword>
<comment type="catalytic activity">
    <reaction evidence="1">
        <text>L-homoserine + ATP = O-phospho-L-homoserine + ADP + H(+)</text>
        <dbReference type="Rhea" id="RHEA:13985"/>
        <dbReference type="ChEBI" id="CHEBI:15378"/>
        <dbReference type="ChEBI" id="CHEBI:30616"/>
        <dbReference type="ChEBI" id="CHEBI:57476"/>
        <dbReference type="ChEBI" id="CHEBI:57590"/>
        <dbReference type="ChEBI" id="CHEBI:456216"/>
        <dbReference type="EC" id="2.7.1.39"/>
    </reaction>
</comment>
<comment type="pathway">
    <text evidence="1">Amino-acid biosynthesis; L-threonine biosynthesis; L-threonine from L-aspartate: step 4/5.</text>
</comment>
<comment type="similarity">
    <text evidence="1">Belongs to the pseudomonas-type ThrB family.</text>
</comment>
<dbReference type="EC" id="2.7.1.39" evidence="1"/>
<dbReference type="EMBL" id="CP001074">
    <property type="protein sequence ID" value="ACE90042.1"/>
    <property type="molecule type" value="Genomic_DNA"/>
</dbReference>
<dbReference type="SMR" id="B3PSC0"/>
<dbReference type="KEGG" id="rec:RHECIAT_CH0001057"/>
<dbReference type="eggNOG" id="COG2334">
    <property type="taxonomic scope" value="Bacteria"/>
</dbReference>
<dbReference type="HOGENOM" id="CLU_053300_0_0_5"/>
<dbReference type="UniPathway" id="UPA00050">
    <property type="reaction ID" value="UER00064"/>
</dbReference>
<dbReference type="Proteomes" id="UP000008817">
    <property type="component" value="Chromosome"/>
</dbReference>
<dbReference type="GO" id="GO:0005524">
    <property type="term" value="F:ATP binding"/>
    <property type="evidence" value="ECO:0007669"/>
    <property type="project" value="UniProtKB-KW"/>
</dbReference>
<dbReference type="GO" id="GO:0004413">
    <property type="term" value="F:homoserine kinase activity"/>
    <property type="evidence" value="ECO:0007669"/>
    <property type="project" value="UniProtKB-UniRule"/>
</dbReference>
<dbReference type="GO" id="GO:0009088">
    <property type="term" value="P:threonine biosynthetic process"/>
    <property type="evidence" value="ECO:0007669"/>
    <property type="project" value="UniProtKB-UniRule"/>
</dbReference>
<dbReference type="CDD" id="cd05153">
    <property type="entry name" value="HomoserineK_II"/>
    <property type="match status" value="1"/>
</dbReference>
<dbReference type="Gene3D" id="3.90.1200.10">
    <property type="match status" value="1"/>
</dbReference>
<dbReference type="Gene3D" id="3.30.200.20">
    <property type="entry name" value="Phosphorylase Kinase, domain 1"/>
    <property type="match status" value="1"/>
</dbReference>
<dbReference type="HAMAP" id="MF_00301">
    <property type="entry name" value="Homoser_kinase_2"/>
    <property type="match status" value="1"/>
</dbReference>
<dbReference type="InterPro" id="IPR002575">
    <property type="entry name" value="Aminoglycoside_PTrfase"/>
</dbReference>
<dbReference type="InterPro" id="IPR005280">
    <property type="entry name" value="Homoserine_kinase_II"/>
</dbReference>
<dbReference type="InterPro" id="IPR011009">
    <property type="entry name" value="Kinase-like_dom_sf"/>
</dbReference>
<dbReference type="InterPro" id="IPR050249">
    <property type="entry name" value="Pseudomonas-type_ThrB"/>
</dbReference>
<dbReference type="NCBIfam" id="NF003558">
    <property type="entry name" value="PRK05231.1"/>
    <property type="match status" value="1"/>
</dbReference>
<dbReference type="NCBIfam" id="TIGR00938">
    <property type="entry name" value="thrB_alt"/>
    <property type="match status" value="1"/>
</dbReference>
<dbReference type="PANTHER" id="PTHR21064:SF6">
    <property type="entry name" value="AMINOGLYCOSIDE PHOSPHOTRANSFERASE DOMAIN-CONTAINING PROTEIN"/>
    <property type="match status" value="1"/>
</dbReference>
<dbReference type="PANTHER" id="PTHR21064">
    <property type="entry name" value="AMINOGLYCOSIDE PHOSPHOTRANSFERASE DOMAIN-CONTAINING PROTEIN-RELATED"/>
    <property type="match status" value="1"/>
</dbReference>
<dbReference type="Pfam" id="PF01636">
    <property type="entry name" value="APH"/>
    <property type="match status" value="1"/>
</dbReference>
<dbReference type="SUPFAM" id="SSF56112">
    <property type="entry name" value="Protein kinase-like (PK-like)"/>
    <property type="match status" value="1"/>
</dbReference>
<sequence>MAVYTDIAEDDLKWFLSEYDAGSLLSYKGIAEGVENSNFLLHTSKEPLILTLYEKRVEKTDLPFFLGLMQHLAARGLSCPLPLPRRDGALLGSLSGRPAALISFLEGMWLRKPEAKHCREVGRALAQMHVAGDGFELKRPNALSIDGWRTLWEKSEARADEVEPGLQHEIRGELDFLSAAWPKGLPAGVIHADLFPDNVFFLGDQLSGLIDFYFACNDLLAYDVSICLNAWCFEKDGAYNITKGTAMLEGYQSVRPLSGEEIAALPVLSRGSALRFFLTRLYDWLTTPEGAMVTKKDPLEYLRKLRFHRQIGSAAEYGLSL</sequence>
<proteinExistence type="inferred from homology"/>
<gene>
    <name evidence="1" type="primary">thrB</name>
    <name type="ordered locus">RHECIAT_CH0001057</name>
</gene>
<protein>
    <recommendedName>
        <fullName evidence="1">Homoserine kinase</fullName>
        <shortName evidence="1">HK</shortName>
        <shortName evidence="1">HSK</shortName>
        <ecNumber evidence="1">2.7.1.39</ecNumber>
    </recommendedName>
</protein>
<feature type="chain" id="PRO_1000115439" description="Homoserine kinase">
    <location>
        <begin position="1"/>
        <end position="321"/>
    </location>
</feature>
<evidence type="ECO:0000255" key="1">
    <source>
        <dbReference type="HAMAP-Rule" id="MF_00301"/>
    </source>
</evidence>
<organism>
    <name type="scientific">Rhizobium etli (strain CIAT 652)</name>
    <dbReference type="NCBI Taxonomy" id="491916"/>
    <lineage>
        <taxon>Bacteria</taxon>
        <taxon>Pseudomonadati</taxon>
        <taxon>Pseudomonadota</taxon>
        <taxon>Alphaproteobacteria</taxon>
        <taxon>Hyphomicrobiales</taxon>
        <taxon>Rhizobiaceae</taxon>
        <taxon>Rhizobium/Agrobacterium group</taxon>
        <taxon>Rhizobium</taxon>
    </lineage>
</organism>